<proteinExistence type="inferred from homology"/>
<gene>
    <name evidence="2" type="primary">rplD</name>
    <name type="ordered locus">Z4690</name>
    <name type="ordered locus">ECs4184</name>
</gene>
<accession>P60725</accession>
<accession>P02388</accession>
<organism>
    <name type="scientific">Escherichia coli O157:H7</name>
    <dbReference type="NCBI Taxonomy" id="83334"/>
    <lineage>
        <taxon>Bacteria</taxon>
        <taxon>Pseudomonadati</taxon>
        <taxon>Pseudomonadota</taxon>
        <taxon>Gammaproteobacteria</taxon>
        <taxon>Enterobacterales</taxon>
        <taxon>Enterobacteriaceae</taxon>
        <taxon>Escherichia</taxon>
    </lineage>
</organism>
<comment type="function">
    <text evidence="2">One of the primary rRNA binding proteins, this protein initially binds near the 5'-end of the 23S rRNA. It is important during the early stages of 50S assembly. It makes multiple contacts with different domains of the 23S rRNA in the assembled 50S subunit and ribosome.</text>
</comment>
<comment type="function">
    <text evidence="1">Protein L4 is a both a transcriptional repressor and a translational repressor protein. It regulates transcription of the S10 operon (to which L4 belongs) by causing premature termination of transcription within the S10 leader. L4 controls the translation of the S10 operon by binding to its mRNA (By similarity).</text>
</comment>
<comment type="function">
    <text evidence="2">Forms part of the polypeptide exit tunnel.</text>
</comment>
<comment type="subunit">
    <text evidence="2">Part of the 50S ribosomal subunit.</text>
</comment>
<comment type="similarity">
    <text evidence="2">Belongs to the universal ribosomal protein uL4 family.</text>
</comment>
<keyword id="KW-1185">Reference proteome</keyword>
<keyword id="KW-0678">Repressor</keyword>
<keyword id="KW-0687">Ribonucleoprotein</keyword>
<keyword id="KW-0689">Ribosomal protein</keyword>
<keyword id="KW-0694">RNA-binding</keyword>
<keyword id="KW-0699">rRNA-binding</keyword>
<keyword id="KW-0804">Transcription</keyword>
<keyword id="KW-0805">Transcription regulation</keyword>
<keyword id="KW-0806">Transcription termination</keyword>
<keyword id="KW-0810">Translation regulation</keyword>
<reference key="1">
    <citation type="journal article" date="2001" name="Nature">
        <title>Genome sequence of enterohaemorrhagic Escherichia coli O157:H7.</title>
        <authorList>
            <person name="Perna N.T."/>
            <person name="Plunkett G. III"/>
            <person name="Burland V."/>
            <person name="Mau B."/>
            <person name="Glasner J.D."/>
            <person name="Rose D.J."/>
            <person name="Mayhew G.F."/>
            <person name="Evans P.S."/>
            <person name="Gregor J."/>
            <person name="Kirkpatrick H.A."/>
            <person name="Posfai G."/>
            <person name="Hackett J."/>
            <person name="Klink S."/>
            <person name="Boutin A."/>
            <person name="Shao Y."/>
            <person name="Miller L."/>
            <person name="Grotbeck E.J."/>
            <person name="Davis N.W."/>
            <person name="Lim A."/>
            <person name="Dimalanta E.T."/>
            <person name="Potamousis K."/>
            <person name="Apodaca J."/>
            <person name="Anantharaman T.S."/>
            <person name="Lin J."/>
            <person name="Yen G."/>
            <person name="Schwartz D.C."/>
            <person name="Welch R.A."/>
            <person name="Blattner F.R."/>
        </authorList>
    </citation>
    <scope>NUCLEOTIDE SEQUENCE [LARGE SCALE GENOMIC DNA]</scope>
    <source>
        <strain>O157:H7 / EDL933 / ATCC 700927 / EHEC</strain>
    </source>
</reference>
<reference key="2">
    <citation type="journal article" date="2001" name="DNA Res.">
        <title>Complete genome sequence of enterohemorrhagic Escherichia coli O157:H7 and genomic comparison with a laboratory strain K-12.</title>
        <authorList>
            <person name="Hayashi T."/>
            <person name="Makino K."/>
            <person name="Ohnishi M."/>
            <person name="Kurokawa K."/>
            <person name="Ishii K."/>
            <person name="Yokoyama K."/>
            <person name="Han C.-G."/>
            <person name="Ohtsubo E."/>
            <person name="Nakayama K."/>
            <person name="Murata T."/>
            <person name="Tanaka M."/>
            <person name="Tobe T."/>
            <person name="Iida T."/>
            <person name="Takami H."/>
            <person name="Honda T."/>
            <person name="Sasakawa C."/>
            <person name="Ogasawara N."/>
            <person name="Yasunaga T."/>
            <person name="Kuhara S."/>
            <person name="Shiba T."/>
            <person name="Hattori M."/>
            <person name="Shinagawa H."/>
        </authorList>
    </citation>
    <scope>NUCLEOTIDE SEQUENCE [LARGE SCALE GENOMIC DNA]</scope>
    <source>
        <strain>O157:H7 / Sakai / RIMD 0509952 / EHEC</strain>
    </source>
</reference>
<evidence type="ECO:0000250" key="1"/>
<evidence type="ECO:0000255" key="2">
    <source>
        <dbReference type="HAMAP-Rule" id="MF_01328"/>
    </source>
</evidence>
<evidence type="ECO:0000256" key="3">
    <source>
        <dbReference type="SAM" id="MobiDB-lite"/>
    </source>
</evidence>
<evidence type="ECO:0000305" key="4"/>
<name>RL4_ECO57</name>
<feature type="chain" id="PRO_0000129217" description="Large ribosomal subunit protein uL4">
    <location>
        <begin position="1"/>
        <end position="201"/>
    </location>
</feature>
<feature type="region of interest" description="Disordered" evidence="3">
    <location>
        <begin position="44"/>
        <end position="71"/>
    </location>
</feature>
<dbReference type="EMBL" id="AE005174">
    <property type="protein sequence ID" value="AAG58440.1"/>
    <property type="molecule type" value="Genomic_DNA"/>
</dbReference>
<dbReference type="EMBL" id="BA000007">
    <property type="protein sequence ID" value="BAB37607.1"/>
    <property type="molecule type" value="Genomic_DNA"/>
</dbReference>
<dbReference type="PIR" id="D85997">
    <property type="entry name" value="D85997"/>
</dbReference>
<dbReference type="PIR" id="H91151">
    <property type="entry name" value="H91151"/>
</dbReference>
<dbReference type="RefSeq" id="NP_312211.1">
    <property type="nucleotide sequence ID" value="NC_002695.1"/>
</dbReference>
<dbReference type="RefSeq" id="WP_000424395.1">
    <property type="nucleotide sequence ID" value="NZ_VOAI01000041.1"/>
</dbReference>
<dbReference type="SMR" id="P60725"/>
<dbReference type="STRING" id="155864.Z4690"/>
<dbReference type="GeneID" id="915964"/>
<dbReference type="GeneID" id="97442859"/>
<dbReference type="KEGG" id="ece:Z4690"/>
<dbReference type="KEGG" id="ecs:ECs_4184"/>
<dbReference type="PATRIC" id="fig|386585.9.peg.4367"/>
<dbReference type="eggNOG" id="COG0088">
    <property type="taxonomic scope" value="Bacteria"/>
</dbReference>
<dbReference type="HOGENOM" id="CLU_041575_5_2_6"/>
<dbReference type="OMA" id="PQVHILE"/>
<dbReference type="Proteomes" id="UP000000558">
    <property type="component" value="Chromosome"/>
</dbReference>
<dbReference type="Proteomes" id="UP000002519">
    <property type="component" value="Chromosome"/>
</dbReference>
<dbReference type="GO" id="GO:1990904">
    <property type="term" value="C:ribonucleoprotein complex"/>
    <property type="evidence" value="ECO:0007669"/>
    <property type="project" value="UniProtKB-KW"/>
</dbReference>
<dbReference type="GO" id="GO:0005840">
    <property type="term" value="C:ribosome"/>
    <property type="evidence" value="ECO:0007669"/>
    <property type="project" value="UniProtKB-KW"/>
</dbReference>
<dbReference type="GO" id="GO:0019843">
    <property type="term" value="F:rRNA binding"/>
    <property type="evidence" value="ECO:0007669"/>
    <property type="project" value="UniProtKB-UniRule"/>
</dbReference>
<dbReference type="GO" id="GO:0003735">
    <property type="term" value="F:structural constituent of ribosome"/>
    <property type="evidence" value="ECO:0007669"/>
    <property type="project" value="InterPro"/>
</dbReference>
<dbReference type="GO" id="GO:0006353">
    <property type="term" value="P:DNA-templated transcription termination"/>
    <property type="evidence" value="ECO:0007669"/>
    <property type="project" value="UniProtKB-KW"/>
</dbReference>
<dbReference type="GO" id="GO:0006417">
    <property type="term" value="P:regulation of translation"/>
    <property type="evidence" value="ECO:0007669"/>
    <property type="project" value="UniProtKB-KW"/>
</dbReference>
<dbReference type="GO" id="GO:0006412">
    <property type="term" value="P:translation"/>
    <property type="evidence" value="ECO:0007669"/>
    <property type="project" value="UniProtKB-UniRule"/>
</dbReference>
<dbReference type="FunFam" id="3.40.1370.10:FF:000001">
    <property type="entry name" value="50S ribosomal protein L4"/>
    <property type="match status" value="1"/>
</dbReference>
<dbReference type="Gene3D" id="3.40.1370.10">
    <property type="match status" value="1"/>
</dbReference>
<dbReference type="HAMAP" id="MF_01328_B">
    <property type="entry name" value="Ribosomal_uL4_B"/>
    <property type="match status" value="1"/>
</dbReference>
<dbReference type="InterPro" id="IPR002136">
    <property type="entry name" value="Ribosomal_uL4"/>
</dbReference>
<dbReference type="InterPro" id="IPR013005">
    <property type="entry name" value="Ribosomal_uL4-like"/>
</dbReference>
<dbReference type="InterPro" id="IPR023574">
    <property type="entry name" value="Ribosomal_uL4_dom_sf"/>
</dbReference>
<dbReference type="NCBIfam" id="TIGR03953">
    <property type="entry name" value="rplD_bact"/>
    <property type="match status" value="1"/>
</dbReference>
<dbReference type="PANTHER" id="PTHR10746">
    <property type="entry name" value="50S RIBOSOMAL PROTEIN L4"/>
    <property type="match status" value="1"/>
</dbReference>
<dbReference type="PANTHER" id="PTHR10746:SF6">
    <property type="entry name" value="LARGE RIBOSOMAL SUBUNIT PROTEIN UL4M"/>
    <property type="match status" value="1"/>
</dbReference>
<dbReference type="Pfam" id="PF00573">
    <property type="entry name" value="Ribosomal_L4"/>
    <property type="match status" value="1"/>
</dbReference>
<dbReference type="SUPFAM" id="SSF52166">
    <property type="entry name" value="Ribosomal protein L4"/>
    <property type="match status" value="1"/>
</dbReference>
<protein>
    <recommendedName>
        <fullName evidence="2">Large ribosomal subunit protein uL4</fullName>
    </recommendedName>
    <alternativeName>
        <fullName evidence="4">50S ribosomal protein L4</fullName>
    </alternativeName>
</protein>
<sequence length="201" mass="22087">MELVLKDAQSALTVSETTFGRDFNEALVHQVVVAYAAGARQGTRAQKTRAEVTGSGKKPWRQKGTGRARSGSIKSPIWRSGGVTFAARPQDHSQKVNKKMYRGALKSILSELVRQDRLIVVEKFSVEAPKTKLLAQKLKDMALEDVLIITGELDENLFLAARNLHKVDVRDATGIDPVSLIAFDKVVMTADAVKQVEEMLA</sequence>